<keyword id="KW-1185">Reference proteome</keyword>
<gene>
    <name type="primary">yotE</name>
    <name type="ordered locus">BSU19910</name>
</gene>
<reference key="1">
    <citation type="journal article" date="1997" name="Nature">
        <title>The complete genome sequence of the Gram-positive bacterium Bacillus subtilis.</title>
        <authorList>
            <person name="Kunst F."/>
            <person name="Ogasawara N."/>
            <person name="Moszer I."/>
            <person name="Albertini A.M."/>
            <person name="Alloni G."/>
            <person name="Azevedo V."/>
            <person name="Bertero M.G."/>
            <person name="Bessieres P."/>
            <person name="Bolotin A."/>
            <person name="Borchert S."/>
            <person name="Borriss R."/>
            <person name="Boursier L."/>
            <person name="Brans A."/>
            <person name="Braun M."/>
            <person name="Brignell S.C."/>
            <person name="Bron S."/>
            <person name="Brouillet S."/>
            <person name="Bruschi C.V."/>
            <person name="Caldwell B."/>
            <person name="Capuano V."/>
            <person name="Carter N.M."/>
            <person name="Choi S.-K."/>
            <person name="Codani J.-J."/>
            <person name="Connerton I.F."/>
            <person name="Cummings N.J."/>
            <person name="Daniel R.A."/>
            <person name="Denizot F."/>
            <person name="Devine K.M."/>
            <person name="Duesterhoeft A."/>
            <person name="Ehrlich S.D."/>
            <person name="Emmerson P.T."/>
            <person name="Entian K.-D."/>
            <person name="Errington J."/>
            <person name="Fabret C."/>
            <person name="Ferrari E."/>
            <person name="Foulger D."/>
            <person name="Fritz C."/>
            <person name="Fujita M."/>
            <person name="Fujita Y."/>
            <person name="Fuma S."/>
            <person name="Galizzi A."/>
            <person name="Galleron N."/>
            <person name="Ghim S.-Y."/>
            <person name="Glaser P."/>
            <person name="Goffeau A."/>
            <person name="Golightly E.J."/>
            <person name="Grandi G."/>
            <person name="Guiseppi G."/>
            <person name="Guy B.J."/>
            <person name="Haga K."/>
            <person name="Haiech J."/>
            <person name="Harwood C.R."/>
            <person name="Henaut A."/>
            <person name="Hilbert H."/>
            <person name="Holsappel S."/>
            <person name="Hosono S."/>
            <person name="Hullo M.-F."/>
            <person name="Itaya M."/>
            <person name="Jones L.-M."/>
            <person name="Joris B."/>
            <person name="Karamata D."/>
            <person name="Kasahara Y."/>
            <person name="Klaerr-Blanchard M."/>
            <person name="Klein C."/>
            <person name="Kobayashi Y."/>
            <person name="Koetter P."/>
            <person name="Koningstein G."/>
            <person name="Krogh S."/>
            <person name="Kumano M."/>
            <person name="Kurita K."/>
            <person name="Lapidus A."/>
            <person name="Lardinois S."/>
            <person name="Lauber J."/>
            <person name="Lazarevic V."/>
            <person name="Lee S.-M."/>
            <person name="Levine A."/>
            <person name="Liu H."/>
            <person name="Masuda S."/>
            <person name="Mauel C."/>
            <person name="Medigue C."/>
            <person name="Medina N."/>
            <person name="Mellado R.P."/>
            <person name="Mizuno M."/>
            <person name="Moestl D."/>
            <person name="Nakai S."/>
            <person name="Noback M."/>
            <person name="Noone D."/>
            <person name="O'Reilly M."/>
            <person name="Ogawa K."/>
            <person name="Ogiwara A."/>
            <person name="Oudega B."/>
            <person name="Park S.-H."/>
            <person name="Parro V."/>
            <person name="Pohl T.M."/>
            <person name="Portetelle D."/>
            <person name="Porwollik S."/>
            <person name="Prescott A.M."/>
            <person name="Presecan E."/>
            <person name="Pujic P."/>
            <person name="Purnelle B."/>
            <person name="Rapoport G."/>
            <person name="Rey M."/>
            <person name="Reynolds S."/>
            <person name="Rieger M."/>
            <person name="Rivolta C."/>
            <person name="Rocha E."/>
            <person name="Roche B."/>
            <person name="Rose M."/>
            <person name="Sadaie Y."/>
            <person name="Sato T."/>
            <person name="Scanlan E."/>
            <person name="Schleich S."/>
            <person name="Schroeter R."/>
            <person name="Scoffone F."/>
            <person name="Sekiguchi J."/>
            <person name="Sekowska A."/>
            <person name="Seror S.J."/>
            <person name="Serror P."/>
            <person name="Shin B.-S."/>
            <person name="Soldo B."/>
            <person name="Sorokin A."/>
            <person name="Tacconi E."/>
            <person name="Takagi T."/>
            <person name="Takahashi H."/>
            <person name="Takemaru K."/>
            <person name="Takeuchi M."/>
            <person name="Tamakoshi A."/>
            <person name="Tanaka T."/>
            <person name="Terpstra P."/>
            <person name="Tognoni A."/>
            <person name="Tosato V."/>
            <person name="Uchiyama S."/>
            <person name="Vandenbol M."/>
            <person name="Vannier F."/>
            <person name="Vassarotti A."/>
            <person name="Viari A."/>
            <person name="Wambutt R."/>
            <person name="Wedler E."/>
            <person name="Wedler H."/>
            <person name="Weitzenegger T."/>
            <person name="Winters P."/>
            <person name="Wipat A."/>
            <person name="Yamamoto H."/>
            <person name="Yamane K."/>
            <person name="Yasumoto K."/>
            <person name="Yata K."/>
            <person name="Yoshida K."/>
            <person name="Yoshikawa H.-F."/>
            <person name="Zumstein E."/>
            <person name="Yoshikawa H."/>
            <person name="Danchin A."/>
        </authorList>
    </citation>
    <scope>NUCLEOTIDE SEQUENCE [LARGE SCALE GENOMIC DNA]</scope>
    <source>
        <strain>168</strain>
    </source>
</reference>
<sequence>MKEIEFEEVKKFVEVMSRRLRSTKVIKIHISYAEWLVAEVERLRGLVK</sequence>
<accession>O31870</accession>
<protein>
    <recommendedName>
        <fullName>SPbeta prophage-derived uncharacterized protein YotE</fullName>
    </recommendedName>
</protein>
<proteinExistence type="predicted"/>
<organism>
    <name type="scientific">Bacillus subtilis (strain 168)</name>
    <dbReference type="NCBI Taxonomy" id="224308"/>
    <lineage>
        <taxon>Bacteria</taxon>
        <taxon>Bacillati</taxon>
        <taxon>Bacillota</taxon>
        <taxon>Bacilli</taxon>
        <taxon>Bacillales</taxon>
        <taxon>Bacillaceae</taxon>
        <taxon>Bacillus</taxon>
    </lineage>
</organism>
<name>YOTE_BACSU</name>
<feature type="chain" id="PRO_0000369131" description="SPbeta prophage-derived uncharacterized protein YotE">
    <location>
        <begin position="1"/>
        <end position="48"/>
    </location>
</feature>
<dbReference type="EMBL" id="AL009126">
    <property type="protein sequence ID" value="CAB13882.1"/>
    <property type="molecule type" value="Genomic_DNA"/>
</dbReference>
<dbReference type="RefSeq" id="NP_389872.1">
    <property type="nucleotide sequence ID" value="NC_000964.3"/>
</dbReference>
<dbReference type="RefSeq" id="WP_009967447.1">
    <property type="nucleotide sequence ID" value="NZ_OZ025638.1"/>
</dbReference>
<dbReference type="SMR" id="O31870"/>
<dbReference type="FunCoup" id="O31870">
    <property type="interactions" value="32"/>
</dbReference>
<dbReference type="STRING" id="224308.BSU19910"/>
<dbReference type="PaxDb" id="224308-BSU19910"/>
<dbReference type="EnsemblBacteria" id="CAB13882">
    <property type="protein sequence ID" value="CAB13882"/>
    <property type="gene ID" value="BSU_19910"/>
</dbReference>
<dbReference type="GeneID" id="939566"/>
<dbReference type="KEGG" id="bsu:BSU19910"/>
<dbReference type="PATRIC" id="fig|224308.179.peg.2179"/>
<dbReference type="InParanoid" id="O31870"/>
<dbReference type="OrthoDB" id="9913332at2"/>
<dbReference type="BioCyc" id="BSUB:BSU19910-MONOMER"/>
<dbReference type="Proteomes" id="UP000001570">
    <property type="component" value="Chromosome"/>
</dbReference>